<gene>
    <name evidence="1" type="primary">thiE</name>
    <name type="ordered locus">Lm4b_00337</name>
</gene>
<proteinExistence type="inferred from homology"/>
<accession>C1KZ34</accession>
<dbReference type="EC" id="2.5.1.3" evidence="1"/>
<dbReference type="EMBL" id="FM242711">
    <property type="protein sequence ID" value="CAS04104.1"/>
    <property type="molecule type" value="Genomic_DNA"/>
</dbReference>
<dbReference type="RefSeq" id="WP_009929382.1">
    <property type="nucleotide sequence ID" value="NC_012488.1"/>
</dbReference>
<dbReference type="SMR" id="C1KZ34"/>
<dbReference type="KEGG" id="lmc:Lm4b_00337"/>
<dbReference type="HOGENOM" id="CLU_018272_3_2_9"/>
<dbReference type="UniPathway" id="UPA00060">
    <property type="reaction ID" value="UER00141"/>
</dbReference>
<dbReference type="GO" id="GO:0005737">
    <property type="term" value="C:cytoplasm"/>
    <property type="evidence" value="ECO:0007669"/>
    <property type="project" value="TreeGrafter"/>
</dbReference>
<dbReference type="GO" id="GO:0000287">
    <property type="term" value="F:magnesium ion binding"/>
    <property type="evidence" value="ECO:0007669"/>
    <property type="project" value="UniProtKB-UniRule"/>
</dbReference>
<dbReference type="GO" id="GO:0004789">
    <property type="term" value="F:thiamine-phosphate diphosphorylase activity"/>
    <property type="evidence" value="ECO:0007669"/>
    <property type="project" value="UniProtKB-UniRule"/>
</dbReference>
<dbReference type="GO" id="GO:0009228">
    <property type="term" value="P:thiamine biosynthetic process"/>
    <property type="evidence" value="ECO:0007669"/>
    <property type="project" value="UniProtKB-KW"/>
</dbReference>
<dbReference type="GO" id="GO:0009229">
    <property type="term" value="P:thiamine diphosphate biosynthetic process"/>
    <property type="evidence" value="ECO:0007669"/>
    <property type="project" value="UniProtKB-UniRule"/>
</dbReference>
<dbReference type="CDD" id="cd00564">
    <property type="entry name" value="TMP_TenI"/>
    <property type="match status" value="1"/>
</dbReference>
<dbReference type="FunFam" id="3.20.20.70:FF:000096">
    <property type="entry name" value="Thiamine-phosphate synthase"/>
    <property type="match status" value="1"/>
</dbReference>
<dbReference type="Gene3D" id="3.20.20.70">
    <property type="entry name" value="Aldolase class I"/>
    <property type="match status" value="1"/>
</dbReference>
<dbReference type="HAMAP" id="MF_00097">
    <property type="entry name" value="TMP_synthase"/>
    <property type="match status" value="1"/>
</dbReference>
<dbReference type="InterPro" id="IPR013785">
    <property type="entry name" value="Aldolase_TIM"/>
</dbReference>
<dbReference type="InterPro" id="IPR036206">
    <property type="entry name" value="ThiamineP_synth_sf"/>
</dbReference>
<dbReference type="InterPro" id="IPR022998">
    <property type="entry name" value="ThiamineP_synth_TenI"/>
</dbReference>
<dbReference type="InterPro" id="IPR034291">
    <property type="entry name" value="TMP_synthase"/>
</dbReference>
<dbReference type="NCBIfam" id="TIGR00693">
    <property type="entry name" value="thiE"/>
    <property type="match status" value="1"/>
</dbReference>
<dbReference type="PANTHER" id="PTHR20857">
    <property type="entry name" value="THIAMINE-PHOSPHATE PYROPHOSPHORYLASE"/>
    <property type="match status" value="1"/>
</dbReference>
<dbReference type="PANTHER" id="PTHR20857:SF15">
    <property type="entry name" value="THIAMINE-PHOSPHATE SYNTHASE"/>
    <property type="match status" value="1"/>
</dbReference>
<dbReference type="Pfam" id="PF02581">
    <property type="entry name" value="TMP-TENI"/>
    <property type="match status" value="1"/>
</dbReference>
<dbReference type="SUPFAM" id="SSF51391">
    <property type="entry name" value="Thiamin phosphate synthase"/>
    <property type="match status" value="1"/>
</dbReference>
<evidence type="ECO:0000255" key="1">
    <source>
        <dbReference type="HAMAP-Rule" id="MF_00097"/>
    </source>
</evidence>
<protein>
    <recommendedName>
        <fullName evidence="1">Thiamine-phosphate synthase</fullName>
        <shortName evidence="1">TP synthase</shortName>
        <shortName evidence="1">TPS</shortName>
        <ecNumber evidence="1">2.5.1.3</ecNumber>
    </recommendedName>
    <alternativeName>
        <fullName evidence="1">Thiamine-phosphate pyrophosphorylase</fullName>
        <shortName evidence="1">TMP pyrophosphorylase</shortName>
        <shortName evidence="1">TMP-PPase</shortName>
    </alternativeName>
</protein>
<feature type="chain" id="PRO_1000202750" description="Thiamine-phosphate synthase">
    <location>
        <begin position="1"/>
        <end position="214"/>
    </location>
</feature>
<feature type="binding site" evidence="1">
    <location>
        <begin position="37"/>
        <end position="41"/>
    </location>
    <ligand>
        <name>4-amino-2-methyl-5-(diphosphooxymethyl)pyrimidine</name>
        <dbReference type="ChEBI" id="CHEBI:57841"/>
    </ligand>
</feature>
<feature type="binding site" evidence="1">
    <location>
        <position position="73"/>
    </location>
    <ligand>
        <name>4-amino-2-methyl-5-(diphosphooxymethyl)pyrimidine</name>
        <dbReference type="ChEBI" id="CHEBI:57841"/>
    </ligand>
</feature>
<feature type="binding site" evidence="1">
    <location>
        <position position="74"/>
    </location>
    <ligand>
        <name>Mg(2+)</name>
        <dbReference type="ChEBI" id="CHEBI:18420"/>
    </ligand>
</feature>
<feature type="binding site" evidence="1">
    <location>
        <position position="93"/>
    </location>
    <ligand>
        <name>Mg(2+)</name>
        <dbReference type="ChEBI" id="CHEBI:18420"/>
    </ligand>
</feature>
<feature type="binding site" evidence="1">
    <location>
        <position position="112"/>
    </location>
    <ligand>
        <name>4-amino-2-methyl-5-(diphosphooxymethyl)pyrimidine</name>
        <dbReference type="ChEBI" id="CHEBI:57841"/>
    </ligand>
</feature>
<feature type="binding site" evidence="1">
    <location>
        <begin position="139"/>
        <end position="141"/>
    </location>
    <ligand>
        <name>2-[(2R,5Z)-2-carboxy-4-methylthiazol-5(2H)-ylidene]ethyl phosphate</name>
        <dbReference type="ChEBI" id="CHEBI:62899"/>
    </ligand>
</feature>
<feature type="binding site" evidence="1">
    <location>
        <position position="142"/>
    </location>
    <ligand>
        <name>4-amino-2-methyl-5-(diphosphooxymethyl)pyrimidine</name>
        <dbReference type="ChEBI" id="CHEBI:57841"/>
    </ligand>
</feature>
<feature type="binding site" evidence="1">
    <location>
        <position position="171"/>
    </location>
    <ligand>
        <name>2-[(2R,5Z)-2-carboxy-4-methylthiazol-5(2H)-ylidene]ethyl phosphate</name>
        <dbReference type="ChEBI" id="CHEBI:62899"/>
    </ligand>
</feature>
<feature type="binding site" evidence="1">
    <location>
        <begin position="191"/>
        <end position="192"/>
    </location>
    <ligand>
        <name>2-[(2R,5Z)-2-carboxy-4-methylthiazol-5(2H)-ylidene]ethyl phosphate</name>
        <dbReference type="ChEBI" id="CHEBI:62899"/>
    </ligand>
</feature>
<comment type="function">
    <text evidence="1">Condenses 4-methyl-5-(beta-hydroxyethyl)thiazole monophosphate (THZ-P) and 2-methyl-4-amino-5-hydroxymethyl pyrimidine pyrophosphate (HMP-PP) to form thiamine monophosphate (TMP).</text>
</comment>
<comment type="catalytic activity">
    <reaction evidence="1">
        <text>2-[(2R,5Z)-2-carboxy-4-methylthiazol-5(2H)-ylidene]ethyl phosphate + 4-amino-2-methyl-5-(diphosphooxymethyl)pyrimidine + 2 H(+) = thiamine phosphate + CO2 + diphosphate</text>
        <dbReference type="Rhea" id="RHEA:47844"/>
        <dbReference type="ChEBI" id="CHEBI:15378"/>
        <dbReference type="ChEBI" id="CHEBI:16526"/>
        <dbReference type="ChEBI" id="CHEBI:33019"/>
        <dbReference type="ChEBI" id="CHEBI:37575"/>
        <dbReference type="ChEBI" id="CHEBI:57841"/>
        <dbReference type="ChEBI" id="CHEBI:62899"/>
        <dbReference type="EC" id="2.5.1.3"/>
    </reaction>
</comment>
<comment type="catalytic activity">
    <reaction evidence="1">
        <text>2-(2-carboxy-4-methylthiazol-5-yl)ethyl phosphate + 4-amino-2-methyl-5-(diphosphooxymethyl)pyrimidine + 2 H(+) = thiamine phosphate + CO2 + diphosphate</text>
        <dbReference type="Rhea" id="RHEA:47848"/>
        <dbReference type="ChEBI" id="CHEBI:15378"/>
        <dbReference type="ChEBI" id="CHEBI:16526"/>
        <dbReference type="ChEBI" id="CHEBI:33019"/>
        <dbReference type="ChEBI" id="CHEBI:37575"/>
        <dbReference type="ChEBI" id="CHEBI:57841"/>
        <dbReference type="ChEBI" id="CHEBI:62890"/>
        <dbReference type="EC" id="2.5.1.3"/>
    </reaction>
</comment>
<comment type="catalytic activity">
    <reaction evidence="1">
        <text>4-methyl-5-(2-phosphooxyethyl)-thiazole + 4-amino-2-methyl-5-(diphosphooxymethyl)pyrimidine + H(+) = thiamine phosphate + diphosphate</text>
        <dbReference type="Rhea" id="RHEA:22328"/>
        <dbReference type="ChEBI" id="CHEBI:15378"/>
        <dbReference type="ChEBI" id="CHEBI:33019"/>
        <dbReference type="ChEBI" id="CHEBI:37575"/>
        <dbReference type="ChEBI" id="CHEBI:57841"/>
        <dbReference type="ChEBI" id="CHEBI:58296"/>
        <dbReference type="EC" id="2.5.1.3"/>
    </reaction>
</comment>
<comment type="cofactor">
    <cofactor evidence="1">
        <name>Mg(2+)</name>
        <dbReference type="ChEBI" id="CHEBI:18420"/>
    </cofactor>
    <text evidence="1">Binds 1 Mg(2+) ion per subunit.</text>
</comment>
<comment type="pathway">
    <text evidence="1">Cofactor biosynthesis; thiamine diphosphate biosynthesis; thiamine phosphate from 4-amino-2-methyl-5-diphosphomethylpyrimidine and 4-methyl-5-(2-phosphoethyl)-thiazole: step 1/1.</text>
</comment>
<comment type="similarity">
    <text evidence="1">Belongs to the thiamine-phosphate synthase family.</text>
</comment>
<name>THIE_LISMC</name>
<keyword id="KW-0460">Magnesium</keyword>
<keyword id="KW-0479">Metal-binding</keyword>
<keyword id="KW-0784">Thiamine biosynthesis</keyword>
<keyword id="KW-0808">Transferase</keyword>
<sequence length="214" mass="22595">MRAELAVYFIAGTQDIVRGTLPGVLEEALKAGITCFQYREKGAGSLQTASERKEMALECQQLCAKYQVPFIINDDVALALEIGADGIHVGQNDEEIRQVIASCAGKMKIGLSVHSVSEAEEAERLGAVDYIGVGPIFPTISKADAEPVSGTAILEEIRRAGIKLPIVGIGGINETNSAEVLTAGADGVSVISAITRSDDCYSVIKQLKNPGYPS</sequence>
<organism>
    <name type="scientific">Listeria monocytogenes serotype 4b (strain CLIP80459)</name>
    <dbReference type="NCBI Taxonomy" id="568819"/>
    <lineage>
        <taxon>Bacteria</taxon>
        <taxon>Bacillati</taxon>
        <taxon>Bacillota</taxon>
        <taxon>Bacilli</taxon>
        <taxon>Bacillales</taxon>
        <taxon>Listeriaceae</taxon>
        <taxon>Listeria</taxon>
    </lineage>
</organism>
<reference key="1">
    <citation type="journal article" date="2012" name="BMC Genomics">
        <title>Comparative genomics and transcriptomics of lineages I, II, and III strains of Listeria monocytogenes.</title>
        <authorList>
            <person name="Hain T."/>
            <person name="Ghai R."/>
            <person name="Billion A."/>
            <person name="Kuenne C.T."/>
            <person name="Steinweg C."/>
            <person name="Izar B."/>
            <person name="Mohamed W."/>
            <person name="Mraheil M."/>
            <person name="Domann E."/>
            <person name="Schaffrath S."/>
            <person name="Karst U."/>
            <person name="Goesmann A."/>
            <person name="Oehm S."/>
            <person name="Puhler A."/>
            <person name="Merkl R."/>
            <person name="Vorwerk S."/>
            <person name="Glaser P."/>
            <person name="Garrido P."/>
            <person name="Rusniok C."/>
            <person name="Buchrieser C."/>
            <person name="Goebel W."/>
            <person name="Chakraborty T."/>
        </authorList>
    </citation>
    <scope>NUCLEOTIDE SEQUENCE [LARGE SCALE GENOMIC DNA]</scope>
    <source>
        <strain>CLIP80459</strain>
    </source>
</reference>